<organism>
    <name type="scientific">Escherichia coli (strain K12 / MC4100 / BW2952)</name>
    <dbReference type="NCBI Taxonomy" id="595496"/>
    <lineage>
        <taxon>Bacteria</taxon>
        <taxon>Pseudomonadati</taxon>
        <taxon>Pseudomonadota</taxon>
        <taxon>Gammaproteobacteria</taxon>
        <taxon>Enterobacterales</taxon>
        <taxon>Enterobacteriaceae</taxon>
        <taxon>Escherichia</taxon>
    </lineage>
</organism>
<reference key="1">
    <citation type="journal article" date="2009" name="J. Bacteriol.">
        <title>Genomic sequencing reveals regulatory mutations and recombinational events in the widely used MC4100 lineage of Escherichia coli K-12.</title>
        <authorList>
            <person name="Ferenci T."/>
            <person name="Zhou Z."/>
            <person name="Betteridge T."/>
            <person name="Ren Y."/>
            <person name="Liu Y."/>
            <person name="Feng L."/>
            <person name="Reeves P.R."/>
            <person name="Wang L."/>
        </authorList>
    </citation>
    <scope>NUCLEOTIDE SEQUENCE [LARGE SCALE GENOMIC DNA]</scope>
    <source>
        <strain>K12 / MC4100 / BW2952</strain>
    </source>
</reference>
<accession>C4ZTK3</accession>
<name>COF_ECOBW</name>
<comment type="function">
    <text evidence="1">Catalyzes the hydrolysis of 4-amino-2-methyl-5-hydroxymethylpyrimidine pyrophosphate (HMP-PP) to 4-amino-2-methyl-5-hydroxymethylpyrimidine phosphate (HMP-P).</text>
</comment>
<comment type="catalytic activity">
    <reaction evidence="1">
        <text>4-amino-2-methyl-5-(diphosphooxymethyl)pyrimidine + H2O = 4-amino-2-methyl-5-(phosphooxymethyl)pyrimidine + phosphate + H(+)</text>
        <dbReference type="Rhea" id="RHEA:27914"/>
        <dbReference type="ChEBI" id="CHEBI:15377"/>
        <dbReference type="ChEBI" id="CHEBI:15378"/>
        <dbReference type="ChEBI" id="CHEBI:43474"/>
        <dbReference type="ChEBI" id="CHEBI:57841"/>
        <dbReference type="ChEBI" id="CHEBI:58354"/>
    </reaction>
</comment>
<comment type="cofactor">
    <cofactor evidence="1">
        <name>Mg(2+)</name>
        <dbReference type="ChEBI" id="CHEBI:18420"/>
    </cofactor>
</comment>
<comment type="similarity">
    <text evidence="1">Belongs to the HAD-like hydrolase superfamily. Cof family.</text>
</comment>
<gene>
    <name evidence="1" type="primary">cof</name>
    <name type="ordered locus">BWG_0328</name>
</gene>
<protein>
    <recommendedName>
        <fullName evidence="1">HMP-PP phosphatase</fullName>
        <ecNumber evidence="1">3.6.1.-</ecNumber>
    </recommendedName>
</protein>
<dbReference type="EC" id="3.6.1.-" evidence="1"/>
<dbReference type="EMBL" id="CP001396">
    <property type="protein sequence ID" value="ACR65637.1"/>
    <property type="molecule type" value="Genomic_DNA"/>
</dbReference>
<dbReference type="RefSeq" id="WP_001336137.1">
    <property type="nucleotide sequence ID" value="NC_012759.1"/>
</dbReference>
<dbReference type="SMR" id="C4ZTK3"/>
<dbReference type="KEGG" id="ebw:BWG_0328"/>
<dbReference type="HOGENOM" id="CLU_044146_5_2_6"/>
<dbReference type="GO" id="GO:0002145">
    <property type="term" value="F:4-amino-5-hydroxymethyl-2-methylpyrimidine diphosphatase activity"/>
    <property type="evidence" value="ECO:0007669"/>
    <property type="project" value="RHEA"/>
</dbReference>
<dbReference type="GO" id="GO:0000287">
    <property type="term" value="F:magnesium ion binding"/>
    <property type="evidence" value="ECO:0000250"/>
    <property type="project" value="UniProtKB"/>
</dbReference>
<dbReference type="GO" id="GO:0016791">
    <property type="term" value="F:phosphatase activity"/>
    <property type="evidence" value="ECO:0000250"/>
    <property type="project" value="UniProtKB"/>
</dbReference>
<dbReference type="CDD" id="cd07516">
    <property type="entry name" value="HAD_Pase"/>
    <property type="match status" value="1"/>
</dbReference>
<dbReference type="FunFam" id="3.30.1240.10:FF:000002">
    <property type="entry name" value="HMP-PP phosphatase"/>
    <property type="match status" value="1"/>
</dbReference>
<dbReference type="Gene3D" id="3.30.1240.10">
    <property type="match status" value="1"/>
</dbReference>
<dbReference type="Gene3D" id="3.40.50.1000">
    <property type="entry name" value="HAD superfamily/HAD-like"/>
    <property type="match status" value="1"/>
</dbReference>
<dbReference type="HAMAP" id="MF_01847">
    <property type="entry name" value="HMP_PP_phosphat"/>
    <property type="match status" value="1"/>
</dbReference>
<dbReference type="InterPro" id="IPR000150">
    <property type="entry name" value="Cof"/>
</dbReference>
<dbReference type="InterPro" id="IPR036412">
    <property type="entry name" value="HAD-like_sf"/>
</dbReference>
<dbReference type="InterPro" id="IPR006379">
    <property type="entry name" value="HAD-SF_hydro_IIB"/>
</dbReference>
<dbReference type="InterPro" id="IPR023214">
    <property type="entry name" value="HAD_sf"/>
</dbReference>
<dbReference type="InterPro" id="IPR023938">
    <property type="entry name" value="HMP-PP_phosphatase"/>
</dbReference>
<dbReference type="NCBIfam" id="TIGR00099">
    <property type="entry name" value="Cof-subfamily"/>
    <property type="match status" value="1"/>
</dbReference>
<dbReference type="NCBIfam" id="TIGR01484">
    <property type="entry name" value="HAD-SF-IIB"/>
    <property type="match status" value="1"/>
</dbReference>
<dbReference type="NCBIfam" id="NF011705">
    <property type="entry name" value="PRK15126.1"/>
    <property type="match status" value="1"/>
</dbReference>
<dbReference type="PANTHER" id="PTHR47267">
    <property type="match status" value="1"/>
</dbReference>
<dbReference type="PANTHER" id="PTHR47267:SF2">
    <property type="entry name" value="HMP-PP PHOSPHATASE"/>
    <property type="match status" value="1"/>
</dbReference>
<dbReference type="Pfam" id="PF08282">
    <property type="entry name" value="Hydrolase_3"/>
    <property type="match status" value="1"/>
</dbReference>
<dbReference type="SFLD" id="SFLDG01140">
    <property type="entry name" value="C2.B:_Phosphomannomutase_and_P"/>
    <property type="match status" value="1"/>
</dbReference>
<dbReference type="SFLD" id="SFLDS00003">
    <property type="entry name" value="Haloacid_Dehalogenase"/>
    <property type="match status" value="1"/>
</dbReference>
<dbReference type="SUPFAM" id="SSF56784">
    <property type="entry name" value="HAD-like"/>
    <property type="match status" value="1"/>
</dbReference>
<dbReference type="PROSITE" id="PS01228">
    <property type="entry name" value="COF_1"/>
    <property type="match status" value="1"/>
</dbReference>
<dbReference type="PROSITE" id="PS01229">
    <property type="entry name" value="COF_2"/>
    <property type="match status" value="1"/>
</dbReference>
<sequence length="272" mass="30371">MARLAAFDMDGTLLMPDHHLGEKTLSTLARLRERDITLTFATGRHALEMQHILGALSLDAYLITGNGTRVHSLEGELLHRDDLPADVAELVLYQQWDTRASMHIFNDDGWFTGKEIPALLQAFVYSGFRYQIIDVKKMPLGSVTKICFCGDHDDLTRLQIQLYEALGERAHLCFSATDCLEVLPVGCNKGAALTVLTQHLGLSLRDCMAFGDAMNDREMLVSVGSGFIMGNAMPQLRAELPHLPVIGHCRNQAVSHYLTHWLDYPHLPYSPE</sequence>
<proteinExistence type="inferred from homology"/>
<keyword id="KW-0378">Hydrolase</keyword>
<keyword id="KW-0460">Magnesium</keyword>
<keyword id="KW-0479">Metal-binding</keyword>
<evidence type="ECO:0000255" key="1">
    <source>
        <dbReference type="HAMAP-Rule" id="MF_01847"/>
    </source>
</evidence>
<feature type="chain" id="PRO_1000216109" description="HMP-PP phosphatase">
    <location>
        <begin position="1"/>
        <end position="272"/>
    </location>
</feature>
<feature type="active site" description="Nucleophile" evidence="1">
    <location>
        <position position="8"/>
    </location>
</feature>
<feature type="binding site" evidence="1">
    <location>
        <position position="8"/>
    </location>
    <ligand>
        <name>Mg(2+)</name>
        <dbReference type="ChEBI" id="CHEBI:18420"/>
    </ligand>
</feature>
<feature type="binding site" evidence="1">
    <location>
        <position position="10"/>
    </location>
    <ligand>
        <name>Mg(2+)</name>
        <dbReference type="ChEBI" id="CHEBI:18420"/>
    </ligand>
</feature>
<feature type="binding site" evidence="1">
    <location>
        <position position="212"/>
    </location>
    <ligand>
        <name>Mg(2+)</name>
        <dbReference type="ChEBI" id="CHEBI:18420"/>
    </ligand>
</feature>